<keyword id="KW-0021">Allosteric enzyme</keyword>
<keyword id="KW-0035">Amyloplast</keyword>
<keyword id="KW-0067">ATP-binding</keyword>
<keyword id="KW-0150">Chloroplast</keyword>
<keyword id="KW-0903">Direct protein sequencing</keyword>
<keyword id="KW-0547">Nucleotide-binding</keyword>
<keyword id="KW-0548">Nucleotidyltransferase</keyword>
<keyword id="KW-0934">Plastid</keyword>
<keyword id="KW-1185">Reference proteome</keyword>
<keyword id="KW-0750">Starch biosynthesis</keyword>
<keyword id="KW-0808">Transferase</keyword>
<sequence>VSDSQNSQDGLDPE</sequence>
<dbReference type="EC" id="2.7.7.27"/>
<dbReference type="UniPathway" id="UPA00152"/>
<dbReference type="Proteomes" id="UP001155700">
    <property type="component" value="Unplaced"/>
</dbReference>
<dbReference type="GO" id="GO:0009501">
    <property type="term" value="C:amyloplast"/>
    <property type="evidence" value="ECO:0007669"/>
    <property type="project" value="UniProtKB-SubCell"/>
</dbReference>
<dbReference type="GO" id="GO:0009507">
    <property type="term" value="C:chloroplast"/>
    <property type="evidence" value="ECO:0007669"/>
    <property type="project" value="UniProtKB-SubCell"/>
</dbReference>
<dbReference type="GO" id="GO:0005524">
    <property type="term" value="F:ATP binding"/>
    <property type="evidence" value="ECO:0007669"/>
    <property type="project" value="UniProtKB-KW"/>
</dbReference>
<dbReference type="GO" id="GO:0008878">
    <property type="term" value="F:glucose-1-phosphate adenylyltransferase activity"/>
    <property type="evidence" value="ECO:0007669"/>
    <property type="project" value="UniProtKB-EC"/>
</dbReference>
<dbReference type="GO" id="GO:0019252">
    <property type="term" value="P:starch biosynthetic process"/>
    <property type="evidence" value="ECO:0007669"/>
    <property type="project" value="UniProtKB-UniPathway"/>
</dbReference>
<accession>P55235</accession>
<evidence type="ECO:0000305" key="1"/>
<feature type="chain" id="PRO_0000195355" description="Glucose-1-phosphate adenylyltransferase small subunit">
    <location>
        <begin position="1"/>
        <end position="14" status="greater than"/>
    </location>
</feature>
<feature type="non-terminal residue">
    <location>
        <position position="14"/>
    </location>
</feature>
<proteinExistence type="evidence at protein level"/>
<organism>
    <name type="scientific">Spinacia oleracea</name>
    <name type="common">Spinach</name>
    <dbReference type="NCBI Taxonomy" id="3562"/>
    <lineage>
        <taxon>Eukaryota</taxon>
        <taxon>Viridiplantae</taxon>
        <taxon>Streptophyta</taxon>
        <taxon>Embryophyta</taxon>
        <taxon>Tracheophyta</taxon>
        <taxon>Spermatophyta</taxon>
        <taxon>Magnoliopsida</taxon>
        <taxon>eudicotyledons</taxon>
        <taxon>Gunneridae</taxon>
        <taxon>Pentapetalae</taxon>
        <taxon>Caryophyllales</taxon>
        <taxon>Chenopodiaceae</taxon>
        <taxon>Chenopodioideae</taxon>
        <taxon>Anserineae</taxon>
        <taxon>Spinacia</taxon>
    </lineage>
</organism>
<comment type="function">
    <text>This protein plays a role in synthesis of starch. It catalyzes the synthesis of the activated glycosyl donor, ADP-glucose from Glc-1-P and ATP.</text>
</comment>
<comment type="catalytic activity">
    <reaction>
        <text>alpha-D-glucose 1-phosphate + ATP + H(+) = ADP-alpha-D-glucose + diphosphate</text>
        <dbReference type="Rhea" id="RHEA:12120"/>
        <dbReference type="ChEBI" id="CHEBI:15378"/>
        <dbReference type="ChEBI" id="CHEBI:30616"/>
        <dbReference type="ChEBI" id="CHEBI:33019"/>
        <dbReference type="ChEBI" id="CHEBI:57498"/>
        <dbReference type="ChEBI" id="CHEBI:58601"/>
        <dbReference type="EC" id="2.7.7.27"/>
    </reaction>
</comment>
<comment type="activity regulation">
    <text>Activated by 3'phosphoglycerate, inhibited by orthophosphate. Allosteric regulation.</text>
</comment>
<comment type="pathway">
    <text>Glycan biosynthesis; starch biosynthesis.</text>
</comment>
<comment type="subunit">
    <text>Heterotetramer.</text>
</comment>
<comment type="subcellular location">
    <subcellularLocation>
        <location>Plastid</location>
        <location>Chloroplast</location>
    </subcellularLocation>
    <subcellularLocation>
        <location>Plastid</location>
        <location>Amyloplast</location>
    </subcellularLocation>
    <text>Found in the chloroplast in leaf. Found in the plastid in the developing endosperm.</text>
</comment>
<comment type="similarity">
    <text evidence="1">Belongs to the bacterial/plant glucose-1-phosphate adenylyltransferase family.</text>
</comment>
<reference key="1">
    <citation type="journal article" date="1987" name="Plant Physiol.">
        <title>Subunit structure of spinach leaf ADPglucose pyrophosphorylase.</title>
        <authorList>
            <person name="Morell M.K."/>
            <person name="Bloom M."/>
            <person name="Knowles V."/>
            <person name="Preiss J."/>
        </authorList>
    </citation>
    <scope>PROTEIN SEQUENCE</scope>
    <source>
        <tissue>Leaf</tissue>
    </source>
</reference>
<name>GLGS_SPIOL</name>
<protein>
    <recommendedName>
        <fullName>Glucose-1-phosphate adenylyltransferase small subunit</fullName>
        <ecNumber>2.7.7.27</ecNumber>
    </recommendedName>
    <alternativeName>
        <fullName>ADP-glucose pyrophosphorylase</fullName>
    </alternativeName>
    <alternativeName>
        <fullName>ADP-glucose synthase</fullName>
    </alternativeName>
    <alternativeName>
        <fullName>AGPase B</fullName>
    </alternativeName>
    <alternativeName>
        <fullName>Alpha-D-glucose-1-phosphate adenyl transferase</fullName>
    </alternativeName>
</protein>